<organism>
    <name type="scientific">Aliivibrio fischeri (strain ATCC 700601 / ES114)</name>
    <name type="common">Vibrio fischeri</name>
    <dbReference type="NCBI Taxonomy" id="312309"/>
    <lineage>
        <taxon>Bacteria</taxon>
        <taxon>Pseudomonadati</taxon>
        <taxon>Pseudomonadota</taxon>
        <taxon>Gammaproteobacteria</taxon>
        <taxon>Vibrionales</taxon>
        <taxon>Vibrionaceae</taxon>
        <taxon>Aliivibrio</taxon>
    </lineage>
</organism>
<reference key="1">
    <citation type="journal article" date="2005" name="Proc. Natl. Acad. Sci. U.S.A.">
        <title>Complete genome sequence of Vibrio fischeri: a symbiotic bacterium with pathogenic congeners.</title>
        <authorList>
            <person name="Ruby E.G."/>
            <person name="Urbanowski M."/>
            <person name="Campbell J."/>
            <person name="Dunn A."/>
            <person name="Faini M."/>
            <person name="Gunsalus R."/>
            <person name="Lostroh P."/>
            <person name="Lupp C."/>
            <person name="McCann J."/>
            <person name="Millikan D."/>
            <person name="Schaefer A."/>
            <person name="Stabb E."/>
            <person name="Stevens A."/>
            <person name="Visick K."/>
            <person name="Whistler C."/>
            <person name="Greenberg E.P."/>
        </authorList>
    </citation>
    <scope>NUCLEOTIDE SEQUENCE [LARGE SCALE GENOMIC DNA]</scope>
    <source>
        <strain>ATCC 700601 / ES114</strain>
    </source>
</reference>
<keyword id="KW-0210">Decarboxylase</keyword>
<keyword id="KW-0456">Lyase</keyword>
<keyword id="KW-0665">Pyrimidine biosynthesis</keyword>
<keyword id="KW-1185">Reference proteome</keyword>
<accession>Q5E3Z6</accession>
<dbReference type="EC" id="4.1.1.23" evidence="1"/>
<dbReference type="EMBL" id="CP000020">
    <property type="protein sequence ID" value="AAW86250.1"/>
    <property type="molecule type" value="Genomic_DNA"/>
</dbReference>
<dbReference type="RefSeq" id="WP_005420156.1">
    <property type="nucleotide sequence ID" value="NZ_CAWLES010000001.1"/>
</dbReference>
<dbReference type="RefSeq" id="YP_205138.1">
    <property type="nucleotide sequence ID" value="NC_006840.2"/>
</dbReference>
<dbReference type="SMR" id="Q5E3Z6"/>
<dbReference type="STRING" id="312309.VF_1755"/>
<dbReference type="EnsemblBacteria" id="AAW86250">
    <property type="protein sequence ID" value="AAW86250"/>
    <property type="gene ID" value="VF_1755"/>
</dbReference>
<dbReference type="GeneID" id="54164454"/>
<dbReference type="KEGG" id="vfi:VF_1755"/>
<dbReference type="PATRIC" id="fig|312309.11.peg.1781"/>
<dbReference type="eggNOG" id="COG0284">
    <property type="taxonomic scope" value="Bacteria"/>
</dbReference>
<dbReference type="HOGENOM" id="CLU_067069_0_0_6"/>
<dbReference type="OrthoDB" id="9806203at2"/>
<dbReference type="UniPathway" id="UPA00070">
    <property type="reaction ID" value="UER00120"/>
</dbReference>
<dbReference type="Proteomes" id="UP000000537">
    <property type="component" value="Chromosome I"/>
</dbReference>
<dbReference type="GO" id="GO:0005829">
    <property type="term" value="C:cytosol"/>
    <property type="evidence" value="ECO:0007669"/>
    <property type="project" value="TreeGrafter"/>
</dbReference>
<dbReference type="GO" id="GO:0004590">
    <property type="term" value="F:orotidine-5'-phosphate decarboxylase activity"/>
    <property type="evidence" value="ECO:0007669"/>
    <property type="project" value="UniProtKB-UniRule"/>
</dbReference>
<dbReference type="GO" id="GO:0006207">
    <property type="term" value="P:'de novo' pyrimidine nucleobase biosynthetic process"/>
    <property type="evidence" value="ECO:0007669"/>
    <property type="project" value="InterPro"/>
</dbReference>
<dbReference type="GO" id="GO:0044205">
    <property type="term" value="P:'de novo' UMP biosynthetic process"/>
    <property type="evidence" value="ECO:0007669"/>
    <property type="project" value="UniProtKB-UniRule"/>
</dbReference>
<dbReference type="CDD" id="cd04725">
    <property type="entry name" value="OMP_decarboxylase_like"/>
    <property type="match status" value="1"/>
</dbReference>
<dbReference type="FunFam" id="3.20.20.70:FF:000015">
    <property type="entry name" value="Orotidine 5'-phosphate decarboxylase"/>
    <property type="match status" value="1"/>
</dbReference>
<dbReference type="Gene3D" id="3.20.20.70">
    <property type="entry name" value="Aldolase class I"/>
    <property type="match status" value="1"/>
</dbReference>
<dbReference type="HAMAP" id="MF_01200_B">
    <property type="entry name" value="OMPdecase_type1_B"/>
    <property type="match status" value="1"/>
</dbReference>
<dbReference type="InterPro" id="IPR013785">
    <property type="entry name" value="Aldolase_TIM"/>
</dbReference>
<dbReference type="InterPro" id="IPR014732">
    <property type="entry name" value="OMPdecase"/>
</dbReference>
<dbReference type="InterPro" id="IPR018089">
    <property type="entry name" value="OMPdecase_AS"/>
</dbReference>
<dbReference type="InterPro" id="IPR047596">
    <property type="entry name" value="OMPdecase_bac"/>
</dbReference>
<dbReference type="InterPro" id="IPR001754">
    <property type="entry name" value="OMPdeCOase_dom"/>
</dbReference>
<dbReference type="InterPro" id="IPR011060">
    <property type="entry name" value="RibuloseP-bd_barrel"/>
</dbReference>
<dbReference type="NCBIfam" id="NF001273">
    <property type="entry name" value="PRK00230.1"/>
    <property type="match status" value="1"/>
</dbReference>
<dbReference type="NCBIfam" id="TIGR01740">
    <property type="entry name" value="pyrF"/>
    <property type="match status" value="1"/>
</dbReference>
<dbReference type="PANTHER" id="PTHR32119">
    <property type="entry name" value="OROTIDINE 5'-PHOSPHATE DECARBOXYLASE"/>
    <property type="match status" value="1"/>
</dbReference>
<dbReference type="PANTHER" id="PTHR32119:SF2">
    <property type="entry name" value="OROTIDINE 5'-PHOSPHATE DECARBOXYLASE"/>
    <property type="match status" value="1"/>
</dbReference>
<dbReference type="Pfam" id="PF00215">
    <property type="entry name" value="OMPdecase"/>
    <property type="match status" value="1"/>
</dbReference>
<dbReference type="SMART" id="SM00934">
    <property type="entry name" value="OMPdecase"/>
    <property type="match status" value="1"/>
</dbReference>
<dbReference type="SUPFAM" id="SSF51366">
    <property type="entry name" value="Ribulose-phoshate binding barrel"/>
    <property type="match status" value="1"/>
</dbReference>
<dbReference type="PROSITE" id="PS00156">
    <property type="entry name" value="OMPDECASE"/>
    <property type="match status" value="1"/>
</dbReference>
<protein>
    <recommendedName>
        <fullName evidence="1">Orotidine 5'-phosphate decarboxylase</fullName>
        <ecNumber evidence="1">4.1.1.23</ecNumber>
    </recommendedName>
    <alternativeName>
        <fullName evidence="1">OMP decarboxylase</fullName>
        <shortName evidence="1">OMPDCase</shortName>
        <shortName evidence="1">OMPdecase</shortName>
    </alternativeName>
</protein>
<sequence length="234" mass="25304">MKDQKVIVALDYDNQADALTFVDKIDPSSCRLKVGKEMFTLFGPEFVKELHKRGFSVFLDLKFHDIPNTCSKAVRAAAEMGVWMVNVHASGGERMMSASREILEPYGSDRPLLIGVTVLTSMEQQDLAGIGLDIAPQEQVKRLAALTKNSGLDGVVCSAQEASMLKADLGKEFQLVTPGIRPAGADVGDQKRIMTPVDAITAGSDYLVIGRPITQAENPSQVLNEINLSLASVL</sequence>
<name>PYRF_ALIF1</name>
<gene>
    <name evidence="1" type="primary">pyrF</name>
    <name type="ordered locus">VF_1755</name>
</gene>
<feature type="chain" id="PRO_0000241928" description="Orotidine 5'-phosphate decarboxylase">
    <location>
        <begin position="1"/>
        <end position="234"/>
    </location>
</feature>
<feature type="active site" description="Proton donor" evidence="1">
    <location>
        <position position="62"/>
    </location>
</feature>
<feature type="binding site" evidence="1">
    <location>
        <position position="11"/>
    </location>
    <ligand>
        <name>substrate</name>
    </ligand>
</feature>
<feature type="binding site" evidence="1">
    <location>
        <position position="33"/>
    </location>
    <ligand>
        <name>substrate</name>
    </ligand>
</feature>
<feature type="binding site" evidence="1">
    <location>
        <begin position="60"/>
        <end position="69"/>
    </location>
    <ligand>
        <name>substrate</name>
    </ligand>
</feature>
<feature type="binding site" evidence="1">
    <location>
        <position position="120"/>
    </location>
    <ligand>
        <name>substrate</name>
    </ligand>
</feature>
<feature type="binding site" evidence="1">
    <location>
        <position position="181"/>
    </location>
    <ligand>
        <name>substrate</name>
    </ligand>
</feature>
<feature type="binding site" evidence="1">
    <location>
        <position position="190"/>
    </location>
    <ligand>
        <name>substrate</name>
    </ligand>
</feature>
<feature type="binding site" evidence="1">
    <location>
        <position position="210"/>
    </location>
    <ligand>
        <name>substrate</name>
    </ligand>
</feature>
<feature type="binding site" evidence="1">
    <location>
        <position position="211"/>
    </location>
    <ligand>
        <name>substrate</name>
    </ligand>
</feature>
<proteinExistence type="inferred from homology"/>
<comment type="function">
    <text evidence="1">Catalyzes the decarboxylation of orotidine 5'-monophosphate (OMP) to uridine 5'-monophosphate (UMP).</text>
</comment>
<comment type="catalytic activity">
    <reaction evidence="1">
        <text>orotidine 5'-phosphate + H(+) = UMP + CO2</text>
        <dbReference type="Rhea" id="RHEA:11596"/>
        <dbReference type="ChEBI" id="CHEBI:15378"/>
        <dbReference type="ChEBI" id="CHEBI:16526"/>
        <dbReference type="ChEBI" id="CHEBI:57538"/>
        <dbReference type="ChEBI" id="CHEBI:57865"/>
        <dbReference type="EC" id="4.1.1.23"/>
    </reaction>
</comment>
<comment type="pathway">
    <text evidence="1">Pyrimidine metabolism; UMP biosynthesis via de novo pathway; UMP from orotate: step 2/2.</text>
</comment>
<comment type="subunit">
    <text evidence="1">Homodimer.</text>
</comment>
<comment type="similarity">
    <text evidence="1">Belongs to the OMP decarboxylase family. Type 1 subfamily.</text>
</comment>
<evidence type="ECO:0000255" key="1">
    <source>
        <dbReference type="HAMAP-Rule" id="MF_01200"/>
    </source>
</evidence>